<accession>B5XWC8</accession>
<comment type="function">
    <text evidence="1">Heme chaperone required for the biogenesis of c-type cytochromes. Transiently binds heme delivered by CcmC and transfers the heme to apo-cytochromes in a process facilitated by CcmF and CcmH.</text>
</comment>
<comment type="subcellular location">
    <subcellularLocation>
        <location evidence="1">Cell inner membrane</location>
        <topology evidence="1">Single-pass type II membrane protein</topology>
        <orientation evidence="1">Periplasmic side</orientation>
    </subcellularLocation>
</comment>
<comment type="similarity">
    <text evidence="1">Belongs to the CcmE/CycJ family.</text>
</comment>
<proteinExistence type="inferred from homology"/>
<sequence>MQARRKTRLYIVLAVLAGLGLTVSLTLYALSSNIDLFYTPGEIIYGKTETRALPHTGQRLRVGGYVQPGSLQRDPQTLDVRFKLYDARGVVDVSYKGILPDLFREGQGVVAQGVLDGERHITAQQVLAKHDENYTPPEVKNAMTPEKTGAQP</sequence>
<reference key="1">
    <citation type="journal article" date="2008" name="PLoS Genet.">
        <title>Complete genome sequence of the N2-fixing broad host range endophyte Klebsiella pneumoniae 342 and virulence predictions verified in mice.</title>
        <authorList>
            <person name="Fouts D.E."/>
            <person name="Tyler H.L."/>
            <person name="DeBoy R.T."/>
            <person name="Daugherty S."/>
            <person name="Ren Q."/>
            <person name="Badger J.H."/>
            <person name="Durkin A.S."/>
            <person name="Huot H."/>
            <person name="Shrivastava S."/>
            <person name="Kothari S."/>
            <person name="Dodson R.J."/>
            <person name="Mohamoud Y."/>
            <person name="Khouri H."/>
            <person name="Roesch L.F.W."/>
            <person name="Krogfelt K.A."/>
            <person name="Struve C."/>
            <person name="Triplett E.W."/>
            <person name="Methe B.A."/>
        </authorList>
    </citation>
    <scope>NUCLEOTIDE SEQUENCE [LARGE SCALE GENOMIC DNA]</scope>
    <source>
        <strain>342</strain>
    </source>
</reference>
<protein>
    <recommendedName>
        <fullName evidence="1">Cytochrome c-type biogenesis protein CcmE</fullName>
    </recommendedName>
    <alternativeName>
        <fullName evidence="1">Cytochrome c maturation protein E</fullName>
    </alternativeName>
    <alternativeName>
        <fullName evidence="1">Heme chaperone CcmE</fullName>
    </alternativeName>
</protein>
<name>CCME_KLEP3</name>
<feature type="chain" id="PRO_1000189028" description="Cytochrome c-type biogenesis protein CcmE">
    <location>
        <begin position="1"/>
        <end position="152"/>
    </location>
</feature>
<feature type="topological domain" description="Cytoplasmic" evidence="1">
    <location>
        <begin position="1"/>
        <end position="8"/>
    </location>
</feature>
<feature type="transmembrane region" description="Helical; Signal-anchor for type II membrane protein" evidence="1">
    <location>
        <begin position="9"/>
        <end position="29"/>
    </location>
</feature>
<feature type="topological domain" description="Periplasmic" evidence="1">
    <location>
        <begin position="30"/>
        <end position="152"/>
    </location>
</feature>
<feature type="region of interest" description="Disordered" evidence="2">
    <location>
        <begin position="133"/>
        <end position="152"/>
    </location>
</feature>
<feature type="binding site" description="covalent" evidence="1">
    <location>
        <position position="130"/>
    </location>
    <ligand>
        <name>heme</name>
        <dbReference type="ChEBI" id="CHEBI:30413"/>
    </ligand>
</feature>
<feature type="binding site" description="axial binding residue" evidence="1">
    <location>
        <position position="134"/>
    </location>
    <ligand>
        <name>heme</name>
        <dbReference type="ChEBI" id="CHEBI:30413"/>
    </ligand>
    <ligandPart>
        <name>Fe</name>
        <dbReference type="ChEBI" id="CHEBI:18248"/>
    </ligandPart>
</feature>
<keyword id="KW-0997">Cell inner membrane</keyword>
<keyword id="KW-1003">Cell membrane</keyword>
<keyword id="KW-0201">Cytochrome c-type biogenesis</keyword>
<keyword id="KW-0349">Heme</keyword>
<keyword id="KW-0408">Iron</keyword>
<keyword id="KW-0472">Membrane</keyword>
<keyword id="KW-0479">Metal-binding</keyword>
<keyword id="KW-0735">Signal-anchor</keyword>
<keyword id="KW-0812">Transmembrane</keyword>
<keyword id="KW-1133">Transmembrane helix</keyword>
<evidence type="ECO:0000255" key="1">
    <source>
        <dbReference type="HAMAP-Rule" id="MF_01959"/>
    </source>
</evidence>
<evidence type="ECO:0000256" key="2">
    <source>
        <dbReference type="SAM" id="MobiDB-lite"/>
    </source>
</evidence>
<gene>
    <name evidence="1" type="primary">ccmE</name>
    <name evidence="1" type="synonym">cycJ</name>
    <name type="ordered locus">KPK_2256</name>
</gene>
<organism>
    <name type="scientific">Klebsiella pneumoniae (strain 342)</name>
    <dbReference type="NCBI Taxonomy" id="507522"/>
    <lineage>
        <taxon>Bacteria</taxon>
        <taxon>Pseudomonadati</taxon>
        <taxon>Pseudomonadota</taxon>
        <taxon>Gammaproteobacteria</taxon>
        <taxon>Enterobacterales</taxon>
        <taxon>Enterobacteriaceae</taxon>
        <taxon>Klebsiella/Raoultella group</taxon>
        <taxon>Klebsiella</taxon>
        <taxon>Klebsiella pneumoniae complex</taxon>
    </lineage>
</organism>
<dbReference type="EMBL" id="CP000964">
    <property type="protein sequence ID" value="ACI06863.1"/>
    <property type="molecule type" value="Genomic_DNA"/>
</dbReference>
<dbReference type="SMR" id="B5XWC8"/>
<dbReference type="KEGG" id="kpe:KPK_2256"/>
<dbReference type="HOGENOM" id="CLU_079503_1_0_6"/>
<dbReference type="Proteomes" id="UP000001734">
    <property type="component" value="Chromosome"/>
</dbReference>
<dbReference type="GO" id="GO:0005886">
    <property type="term" value="C:plasma membrane"/>
    <property type="evidence" value="ECO:0007669"/>
    <property type="project" value="UniProtKB-SubCell"/>
</dbReference>
<dbReference type="GO" id="GO:0020037">
    <property type="term" value="F:heme binding"/>
    <property type="evidence" value="ECO:0007669"/>
    <property type="project" value="InterPro"/>
</dbReference>
<dbReference type="GO" id="GO:0046872">
    <property type="term" value="F:metal ion binding"/>
    <property type="evidence" value="ECO:0007669"/>
    <property type="project" value="UniProtKB-KW"/>
</dbReference>
<dbReference type="GO" id="GO:0017004">
    <property type="term" value="P:cytochrome complex assembly"/>
    <property type="evidence" value="ECO:0007669"/>
    <property type="project" value="UniProtKB-KW"/>
</dbReference>
<dbReference type="FunFam" id="2.40.50.140:FF:000104">
    <property type="entry name" value="Cytochrome c-type biogenesis protein CcmE"/>
    <property type="match status" value="1"/>
</dbReference>
<dbReference type="Gene3D" id="2.40.50.140">
    <property type="entry name" value="Nucleic acid-binding proteins"/>
    <property type="match status" value="1"/>
</dbReference>
<dbReference type="HAMAP" id="MF_01959">
    <property type="entry name" value="CcmE"/>
    <property type="match status" value="1"/>
</dbReference>
<dbReference type="InterPro" id="IPR004329">
    <property type="entry name" value="CcmE"/>
</dbReference>
<dbReference type="InterPro" id="IPR036127">
    <property type="entry name" value="CcmE-like_sf"/>
</dbReference>
<dbReference type="InterPro" id="IPR012340">
    <property type="entry name" value="NA-bd_OB-fold"/>
</dbReference>
<dbReference type="NCBIfam" id="NF009638">
    <property type="entry name" value="PRK13165.1"/>
    <property type="match status" value="1"/>
</dbReference>
<dbReference type="NCBIfam" id="NF009727">
    <property type="entry name" value="PRK13254.1-1"/>
    <property type="match status" value="1"/>
</dbReference>
<dbReference type="PANTHER" id="PTHR34128">
    <property type="entry name" value="CYTOCHROME C-TYPE BIOGENESIS PROTEIN CCME HOMOLOG, MITOCHONDRIAL"/>
    <property type="match status" value="1"/>
</dbReference>
<dbReference type="PANTHER" id="PTHR34128:SF2">
    <property type="entry name" value="CYTOCHROME C-TYPE BIOGENESIS PROTEIN CCME HOMOLOG, MITOCHONDRIAL"/>
    <property type="match status" value="1"/>
</dbReference>
<dbReference type="Pfam" id="PF03100">
    <property type="entry name" value="CcmE"/>
    <property type="match status" value="1"/>
</dbReference>
<dbReference type="SUPFAM" id="SSF82093">
    <property type="entry name" value="Heme chaperone CcmE"/>
    <property type="match status" value="1"/>
</dbReference>